<protein>
    <recommendedName>
        <fullName evidence="1">tRNA pseudouridine synthase A</fullName>
        <ecNumber evidence="1">5.4.99.12</ecNumber>
    </recommendedName>
    <alternativeName>
        <fullName evidence="1">tRNA pseudouridine(38-40) synthase</fullName>
    </alternativeName>
    <alternativeName>
        <fullName evidence="1">tRNA pseudouridylate synthase I</fullName>
    </alternativeName>
    <alternativeName>
        <fullName evidence="1">tRNA-uridine isomerase I</fullName>
    </alternativeName>
</protein>
<keyword id="KW-0413">Isomerase</keyword>
<keyword id="KW-0819">tRNA processing</keyword>
<sequence length="244" mass="27599">MRNIKLIIEFDGTNFCGWQRQVKDRTVQGCLENAILKITGEKSLTNGSSRTDGGVHAKAMVANFITNSSIPGEKFREALNTKLPDDISIIKSEEVDMEFHARYSSKGKMYSYTIVNRYEKLAFGKQYLHHVRKELNVEDMKKACEYFLGKHDFKAFMSPGSSAKTTVRTITDFYIEENKNVIRIFISADGFLYNMVRIIVGTLINVGTGKTKLQDVNNIINDGIRKNAGMCVPPNGLVLEKVFY</sequence>
<comment type="function">
    <text evidence="1">Formation of pseudouridine at positions 38, 39 and 40 in the anticodon stem and loop of transfer RNAs.</text>
</comment>
<comment type="catalytic activity">
    <reaction evidence="1">
        <text>uridine(38/39/40) in tRNA = pseudouridine(38/39/40) in tRNA</text>
        <dbReference type="Rhea" id="RHEA:22376"/>
        <dbReference type="Rhea" id="RHEA-COMP:10085"/>
        <dbReference type="Rhea" id="RHEA-COMP:10087"/>
        <dbReference type="ChEBI" id="CHEBI:65314"/>
        <dbReference type="ChEBI" id="CHEBI:65315"/>
        <dbReference type="EC" id="5.4.99.12"/>
    </reaction>
</comment>
<comment type="subunit">
    <text evidence="1">Homodimer.</text>
</comment>
<comment type="similarity">
    <text evidence="1">Belongs to the tRNA pseudouridine synthase TruA family.</text>
</comment>
<name>TRUA_CLOBA</name>
<organism>
    <name type="scientific">Clostridium botulinum (strain Alaska E43 / Type E3)</name>
    <dbReference type="NCBI Taxonomy" id="508767"/>
    <lineage>
        <taxon>Bacteria</taxon>
        <taxon>Bacillati</taxon>
        <taxon>Bacillota</taxon>
        <taxon>Clostridia</taxon>
        <taxon>Eubacteriales</taxon>
        <taxon>Clostridiaceae</taxon>
        <taxon>Clostridium</taxon>
    </lineage>
</organism>
<feature type="chain" id="PRO_1000097732" description="tRNA pseudouridine synthase A">
    <location>
        <begin position="1"/>
        <end position="244"/>
    </location>
</feature>
<feature type="active site" description="Nucleophile" evidence="1">
    <location>
        <position position="52"/>
    </location>
</feature>
<feature type="binding site" evidence="1">
    <location>
        <position position="110"/>
    </location>
    <ligand>
        <name>substrate</name>
    </ligand>
</feature>
<gene>
    <name evidence="1" type="primary">truA</name>
    <name type="ordered locus">CLH_0271</name>
</gene>
<proteinExistence type="inferred from homology"/>
<dbReference type="EC" id="5.4.99.12" evidence="1"/>
<dbReference type="EMBL" id="CP001078">
    <property type="protein sequence ID" value="ACD54149.1"/>
    <property type="molecule type" value="Genomic_DNA"/>
</dbReference>
<dbReference type="RefSeq" id="WP_012451900.1">
    <property type="nucleotide sequence ID" value="NC_010723.1"/>
</dbReference>
<dbReference type="SMR" id="B2UYE4"/>
<dbReference type="KEGG" id="cbt:CLH_0271"/>
<dbReference type="HOGENOM" id="CLU_014673_0_1_9"/>
<dbReference type="GO" id="GO:0003723">
    <property type="term" value="F:RNA binding"/>
    <property type="evidence" value="ECO:0007669"/>
    <property type="project" value="InterPro"/>
</dbReference>
<dbReference type="GO" id="GO:0160147">
    <property type="term" value="F:tRNA pseudouridine(38-40) synthase activity"/>
    <property type="evidence" value="ECO:0007669"/>
    <property type="project" value="UniProtKB-EC"/>
</dbReference>
<dbReference type="GO" id="GO:0031119">
    <property type="term" value="P:tRNA pseudouridine synthesis"/>
    <property type="evidence" value="ECO:0007669"/>
    <property type="project" value="UniProtKB-UniRule"/>
</dbReference>
<dbReference type="CDD" id="cd02570">
    <property type="entry name" value="PseudoU_synth_EcTruA"/>
    <property type="match status" value="1"/>
</dbReference>
<dbReference type="FunFam" id="3.30.70.580:FF:000001">
    <property type="entry name" value="tRNA pseudouridine synthase A"/>
    <property type="match status" value="1"/>
</dbReference>
<dbReference type="Gene3D" id="3.30.70.660">
    <property type="entry name" value="Pseudouridine synthase I, catalytic domain, C-terminal subdomain"/>
    <property type="match status" value="1"/>
</dbReference>
<dbReference type="Gene3D" id="3.30.70.580">
    <property type="entry name" value="Pseudouridine synthase I, catalytic domain, N-terminal subdomain"/>
    <property type="match status" value="1"/>
</dbReference>
<dbReference type="HAMAP" id="MF_00171">
    <property type="entry name" value="TruA"/>
    <property type="match status" value="1"/>
</dbReference>
<dbReference type="InterPro" id="IPR020103">
    <property type="entry name" value="PsdUridine_synth_cat_dom_sf"/>
</dbReference>
<dbReference type="InterPro" id="IPR001406">
    <property type="entry name" value="PsdUridine_synth_TruA"/>
</dbReference>
<dbReference type="InterPro" id="IPR020097">
    <property type="entry name" value="PsdUridine_synth_TruA_a/b_dom"/>
</dbReference>
<dbReference type="InterPro" id="IPR020095">
    <property type="entry name" value="PsdUridine_synth_TruA_C"/>
</dbReference>
<dbReference type="InterPro" id="IPR020094">
    <property type="entry name" value="TruA/RsuA/RluB/E/F_N"/>
</dbReference>
<dbReference type="NCBIfam" id="TIGR00071">
    <property type="entry name" value="hisT_truA"/>
    <property type="match status" value="1"/>
</dbReference>
<dbReference type="PANTHER" id="PTHR11142">
    <property type="entry name" value="PSEUDOURIDYLATE SYNTHASE"/>
    <property type="match status" value="1"/>
</dbReference>
<dbReference type="PANTHER" id="PTHR11142:SF0">
    <property type="entry name" value="TRNA PSEUDOURIDINE SYNTHASE-LIKE 1"/>
    <property type="match status" value="1"/>
</dbReference>
<dbReference type="Pfam" id="PF01416">
    <property type="entry name" value="PseudoU_synth_1"/>
    <property type="match status" value="2"/>
</dbReference>
<dbReference type="PIRSF" id="PIRSF001430">
    <property type="entry name" value="tRNA_psdUrid_synth"/>
    <property type="match status" value="1"/>
</dbReference>
<dbReference type="SUPFAM" id="SSF55120">
    <property type="entry name" value="Pseudouridine synthase"/>
    <property type="match status" value="1"/>
</dbReference>
<accession>B2UYE4</accession>
<reference key="1">
    <citation type="submission" date="2008-05" db="EMBL/GenBank/DDBJ databases">
        <title>Complete genome sequence of Clostridium botulinum E3 str. Alaska E43.</title>
        <authorList>
            <person name="Brinkac L.M."/>
            <person name="Brown J.L."/>
            <person name="Bruce D."/>
            <person name="Detter C."/>
            <person name="Munk C."/>
            <person name="Smith L.A."/>
            <person name="Smith T.J."/>
            <person name="Sutton G."/>
            <person name="Brettin T.S."/>
        </authorList>
    </citation>
    <scope>NUCLEOTIDE SEQUENCE [LARGE SCALE GENOMIC DNA]</scope>
    <source>
        <strain>Alaska E43 / Type E3</strain>
    </source>
</reference>
<evidence type="ECO:0000255" key="1">
    <source>
        <dbReference type="HAMAP-Rule" id="MF_00171"/>
    </source>
</evidence>